<feature type="chain" id="PRO_0000124565" description="Autophagy-related protein 17">
    <location>
        <begin position="1"/>
        <end position="408"/>
    </location>
</feature>
<organism>
    <name type="scientific">Yarrowia lipolytica (strain CLIB 122 / E 150)</name>
    <name type="common">Yeast</name>
    <name type="synonym">Candida lipolytica</name>
    <dbReference type="NCBI Taxonomy" id="284591"/>
    <lineage>
        <taxon>Eukaryota</taxon>
        <taxon>Fungi</taxon>
        <taxon>Dikarya</taxon>
        <taxon>Ascomycota</taxon>
        <taxon>Saccharomycotina</taxon>
        <taxon>Dipodascomycetes</taxon>
        <taxon>Dipodascales</taxon>
        <taxon>Dipodascales incertae sedis</taxon>
        <taxon>Yarrowia</taxon>
    </lineage>
</organism>
<evidence type="ECO:0000250" key="1"/>
<evidence type="ECO:0000305" key="2"/>
<accession>Q6C0L6</accession>
<gene>
    <name type="primary">ATG17</name>
    <name type="ordered locus">YALI0F23639g</name>
</gene>
<dbReference type="EMBL" id="CR382132">
    <property type="protein sequence ID" value="CAG78607.1"/>
    <property type="molecule type" value="Genomic_DNA"/>
</dbReference>
<dbReference type="RefSeq" id="XP_505796.1">
    <property type="nucleotide sequence ID" value="XM_505796.1"/>
</dbReference>
<dbReference type="SMR" id="Q6C0L6"/>
<dbReference type="STRING" id="284591.Q6C0L6"/>
<dbReference type="EnsemblFungi" id="CAG78607">
    <property type="protein sequence ID" value="CAG78607"/>
    <property type="gene ID" value="YALI0_F23639g"/>
</dbReference>
<dbReference type="KEGG" id="yli:2908761"/>
<dbReference type="VEuPathDB" id="FungiDB:YALI0_F23639g"/>
<dbReference type="HOGENOM" id="CLU_565132_0_0_1"/>
<dbReference type="InParanoid" id="Q6C0L6"/>
<dbReference type="OMA" id="WRANDIV"/>
<dbReference type="OrthoDB" id="124190at4891"/>
<dbReference type="Proteomes" id="UP000001300">
    <property type="component" value="Chromosome F"/>
</dbReference>
<dbReference type="GO" id="GO:1990316">
    <property type="term" value="C:Atg1/ULK1 kinase complex"/>
    <property type="evidence" value="ECO:0000318"/>
    <property type="project" value="GO_Central"/>
</dbReference>
<dbReference type="GO" id="GO:0000407">
    <property type="term" value="C:phagophore assembly site"/>
    <property type="evidence" value="ECO:0000318"/>
    <property type="project" value="GO_Central"/>
</dbReference>
<dbReference type="GO" id="GO:0034045">
    <property type="term" value="C:phagophore assembly site membrane"/>
    <property type="evidence" value="ECO:0007669"/>
    <property type="project" value="UniProtKB-SubCell"/>
</dbReference>
<dbReference type="GO" id="GO:0060090">
    <property type="term" value="F:molecular adaptor activity"/>
    <property type="evidence" value="ECO:0000318"/>
    <property type="project" value="GO_Central"/>
</dbReference>
<dbReference type="GO" id="GO:0030295">
    <property type="term" value="F:protein kinase activator activity"/>
    <property type="evidence" value="ECO:0000318"/>
    <property type="project" value="GO_Central"/>
</dbReference>
<dbReference type="GO" id="GO:0000045">
    <property type="term" value="P:autophagosome assembly"/>
    <property type="evidence" value="ECO:0000318"/>
    <property type="project" value="GO_Central"/>
</dbReference>
<dbReference type="GO" id="GO:0000423">
    <property type="term" value="P:mitophagy"/>
    <property type="evidence" value="ECO:0000318"/>
    <property type="project" value="GO_Central"/>
</dbReference>
<dbReference type="GO" id="GO:0000425">
    <property type="term" value="P:pexophagy"/>
    <property type="evidence" value="ECO:0000318"/>
    <property type="project" value="GO_Central"/>
</dbReference>
<dbReference type="GO" id="GO:0034727">
    <property type="term" value="P:piecemeal microautophagy of the nucleus"/>
    <property type="evidence" value="ECO:0000318"/>
    <property type="project" value="GO_Central"/>
</dbReference>
<dbReference type="InterPro" id="IPR007240">
    <property type="entry name" value="Atg17"/>
</dbReference>
<dbReference type="InterPro" id="IPR045326">
    <property type="entry name" value="ATG17-like_dom"/>
</dbReference>
<dbReference type="PANTHER" id="PTHR28005">
    <property type="entry name" value="AUTOPHAGY-RELATED PROTEIN 17"/>
    <property type="match status" value="1"/>
</dbReference>
<dbReference type="PANTHER" id="PTHR28005:SF1">
    <property type="entry name" value="AUTOPHAGY-RELATED PROTEIN 17"/>
    <property type="match status" value="1"/>
</dbReference>
<dbReference type="Pfam" id="PF04108">
    <property type="entry name" value="ATG17_like"/>
    <property type="match status" value="1"/>
</dbReference>
<proteinExistence type="inferred from homology"/>
<sequence>MEQLFREAQDALAAAGPLCQESQDVLARARQNLEVAVHLGIRTQFLAKAHAHQWTLASKFYSNALTRTKKSLETVTRQQTRFQAARGALEEALGELAATPVQLRVNNGAHNLREFVDEDLISAQVQGKGWNEVHEEALNVFRVLLPEIQRHGDIVNRSKKEFEREKAEQTELLIHQTSDSGIYDLLNSAEACSEDMANLLQSLARHYDLCERGQDLSTGAIEAEDVNELGELRAVLENDAQQLPDVLDELQERLDEVKQGCQGVHNHMTQMYHSYSLEVRQLEGIQAVEKTMDATLEICETQQRDTKEYLLKVQRYVSETSAVVTHYQTFLNSYKALLHEAERRNAAEAKMKDYVTEVNAKLAQMSIQETNRRQDFVAQQGDYLPADIWDELLLPSRRFEARELDGEL</sequence>
<comment type="function">
    <text evidence="1">Autophagy-specific protein that functions in response to autophagy-inducing signals as a scaffold to recruit other ATG proteins to organize pre-autophagosomal structure (PAS) formation. Modulates the timing and magnitude of the autophagy response, such as the size of the sequestering vesicles. Plays particularly a role in pexophagy and nucleophagy (By similarity).</text>
</comment>
<comment type="subcellular location">
    <subcellularLocation>
        <location evidence="1">Cytoplasm</location>
    </subcellularLocation>
    <subcellularLocation>
        <location evidence="1">Preautophagosomal structure membrane</location>
        <topology evidence="1">Peripheral membrane protein</topology>
    </subcellularLocation>
</comment>
<comment type="similarity">
    <text evidence="2">Belongs to the ATG17 family.</text>
</comment>
<protein>
    <recommendedName>
        <fullName>Autophagy-related protein 17</fullName>
    </recommendedName>
</protein>
<name>ATG17_YARLI</name>
<reference key="1">
    <citation type="journal article" date="2004" name="Nature">
        <title>Genome evolution in yeasts.</title>
        <authorList>
            <person name="Dujon B."/>
            <person name="Sherman D."/>
            <person name="Fischer G."/>
            <person name="Durrens P."/>
            <person name="Casaregola S."/>
            <person name="Lafontaine I."/>
            <person name="de Montigny J."/>
            <person name="Marck C."/>
            <person name="Neuveglise C."/>
            <person name="Talla E."/>
            <person name="Goffard N."/>
            <person name="Frangeul L."/>
            <person name="Aigle M."/>
            <person name="Anthouard V."/>
            <person name="Babour A."/>
            <person name="Barbe V."/>
            <person name="Barnay S."/>
            <person name="Blanchin S."/>
            <person name="Beckerich J.-M."/>
            <person name="Beyne E."/>
            <person name="Bleykasten C."/>
            <person name="Boisrame A."/>
            <person name="Boyer J."/>
            <person name="Cattolico L."/>
            <person name="Confanioleri F."/>
            <person name="de Daruvar A."/>
            <person name="Despons L."/>
            <person name="Fabre E."/>
            <person name="Fairhead C."/>
            <person name="Ferry-Dumazet H."/>
            <person name="Groppi A."/>
            <person name="Hantraye F."/>
            <person name="Hennequin C."/>
            <person name="Jauniaux N."/>
            <person name="Joyet P."/>
            <person name="Kachouri R."/>
            <person name="Kerrest A."/>
            <person name="Koszul R."/>
            <person name="Lemaire M."/>
            <person name="Lesur I."/>
            <person name="Ma L."/>
            <person name="Muller H."/>
            <person name="Nicaud J.-M."/>
            <person name="Nikolski M."/>
            <person name="Oztas S."/>
            <person name="Ozier-Kalogeropoulos O."/>
            <person name="Pellenz S."/>
            <person name="Potier S."/>
            <person name="Richard G.-F."/>
            <person name="Straub M.-L."/>
            <person name="Suleau A."/>
            <person name="Swennen D."/>
            <person name="Tekaia F."/>
            <person name="Wesolowski-Louvel M."/>
            <person name="Westhof E."/>
            <person name="Wirth B."/>
            <person name="Zeniou-Meyer M."/>
            <person name="Zivanovic Y."/>
            <person name="Bolotin-Fukuhara M."/>
            <person name="Thierry A."/>
            <person name="Bouchier C."/>
            <person name="Caudron B."/>
            <person name="Scarpelli C."/>
            <person name="Gaillardin C."/>
            <person name="Weissenbach J."/>
            <person name="Wincker P."/>
            <person name="Souciet J.-L."/>
        </authorList>
    </citation>
    <scope>NUCLEOTIDE SEQUENCE [LARGE SCALE GENOMIC DNA]</scope>
    <source>
        <strain>CLIB 122 / E 150</strain>
    </source>
</reference>
<keyword id="KW-0072">Autophagy</keyword>
<keyword id="KW-0963">Cytoplasm</keyword>
<keyword id="KW-0472">Membrane</keyword>
<keyword id="KW-1185">Reference proteome</keyword>